<protein>
    <recommendedName>
        <fullName evidence="1">Putative uncharacterized protein C8orf89</fullName>
    </recommendedName>
</protein>
<organism>
    <name type="scientific">Homo sapiens</name>
    <name type="common">Human</name>
    <dbReference type="NCBI Taxonomy" id="9606"/>
    <lineage>
        <taxon>Eukaryota</taxon>
        <taxon>Metazoa</taxon>
        <taxon>Chordata</taxon>
        <taxon>Craniata</taxon>
        <taxon>Vertebrata</taxon>
        <taxon>Euteleostomi</taxon>
        <taxon>Mammalia</taxon>
        <taxon>Eutheria</taxon>
        <taxon>Euarchontoglires</taxon>
        <taxon>Primates</taxon>
        <taxon>Haplorrhini</taxon>
        <taxon>Catarrhini</taxon>
        <taxon>Hominidae</taxon>
        <taxon>Homo</taxon>
    </lineage>
</organism>
<name>CH089_HUMAN</name>
<feature type="chain" id="PRO_0000431377" description="Putative uncharacterized protein C8orf89">
    <location>
        <begin position="1"/>
        <end position="161"/>
    </location>
</feature>
<gene>
    <name evidence="2" type="primary">C8orf89</name>
</gene>
<evidence type="ECO:0000305" key="1"/>
<evidence type="ECO:0000312" key="2">
    <source>
        <dbReference type="HGNC" id="HGNC:51258"/>
    </source>
</evidence>
<keyword id="KW-1185">Reference proteome</keyword>
<accession>P0DMQ9</accession>
<reference key="1">
    <citation type="journal article" date="2006" name="Nature">
        <title>DNA sequence and analysis of human chromosome 8.</title>
        <authorList>
            <person name="Nusbaum C."/>
            <person name="Mikkelsen T.S."/>
            <person name="Zody M.C."/>
            <person name="Asakawa S."/>
            <person name="Taudien S."/>
            <person name="Garber M."/>
            <person name="Kodira C.D."/>
            <person name="Schueler M.G."/>
            <person name="Shimizu A."/>
            <person name="Whittaker C.A."/>
            <person name="Chang J.L."/>
            <person name="Cuomo C.A."/>
            <person name="Dewar K."/>
            <person name="FitzGerald M.G."/>
            <person name="Yang X."/>
            <person name="Allen N.R."/>
            <person name="Anderson S."/>
            <person name="Asakawa T."/>
            <person name="Blechschmidt K."/>
            <person name="Bloom T."/>
            <person name="Borowsky M.L."/>
            <person name="Butler J."/>
            <person name="Cook A."/>
            <person name="Corum B."/>
            <person name="DeArellano K."/>
            <person name="DeCaprio D."/>
            <person name="Dooley K.T."/>
            <person name="Dorris L. III"/>
            <person name="Engels R."/>
            <person name="Gloeckner G."/>
            <person name="Hafez N."/>
            <person name="Hagopian D.S."/>
            <person name="Hall J.L."/>
            <person name="Ishikawa S.K."/>
            <person name="Jaffe D.B."/>
            <person name="Kamat A."/>
            <person name="Kudoh J."/>
            <person name="Lehmann R."/>
            <person name="Lokitsang T."/>
            <person name="Macdonald P."/>
            <person name="Major J.E."/>
            <person name="Matthews C.D."/>
            <person name="Mauceli E."/>
            <person name="Menzel U."/>
            <person name="Mihalev A.H."/>
            <person name="Minoshima S."/>
            <person name="Murayama Y."/>
            <person name="Naylor J.W."/>
            <person name="Nicol R."/>
            <person name="Nguyen C."/>
            <person name="O'Leary S.B."/>
            <person name="O'Neill K."/>
            <person name="Parker S.C.J."/>
            <person name="Polley A."/>
            <person name="Raymond C.K."/>
            <person name="Reichwald K."/>
            <person name="Rodriguez J."/>
            <person name="Sasaki T."/>
            <person name="Schilhabel M."/>
            <person name="Siddiqui R."/>
            <person name="Smith C.L."/>
            <person name="Sneddon T.P."/>
            <person name="Talamas J.A."/>
            <person name="Tenzin P."/>
            <person name="Topham K."/>
            <person name="Venkataraman V."/>
            <person name="Wen G."/>
            <person name="Yamazaki S."/>
            <person name="Young S.K."/>
            <person name="Zeng Q."/>
            <person name="Zimmer A.R."/>
            <person name="Rosenthal A."/>
            <person name="Birren B.W."/>
            <person name="Platzer M."/>
            <person name="Shimizu N."/>
            <person name="Lander E.S."/>
        </authorList>
    </citation>
    <scope>NUCLEOTIDE SEQUENCE [LARGE SCALE GENOMIC DNA]</scope>
</reference>
<reference key="2">
    <citation type="journal article" date="2004" name="Genome Res.">
        <title>The status, quality, and expansion of the NIH full-length cDNA project: the Mammalian Gene Collection (MGC).</title>
        <authorList>
            <consortium name="The MGC Project Team"/>
        </authorList>
    </citation>
    <scope>NUCLEOTIDE SEQUENCE [LARGE SCALE MRNA]</scope>
</reference>
<dbReference type="EMBL" id="AC100823">
    <property type="status" value="NOT_ANNOTATED_CDS"/>
    <property type="molecule type" value="Genomic_DNA"/>
</dbReference>
<dbReference type="EMBL" id="BC127738">
    <property type="status" value="NOT_ANNOTATED_CDS"/>
    <property type="molecule type" value="mRNA"/>
</dbReference>
<dbReference type="CCDS" id="CCDS75752.1"/>
<dbReference type="RefSeq" id="NP_001230166.1">
    <property type="nucleotide sequence ID" value="NM_001243237.3"/>
</dbReference>
<dbReference type="RefSeq" id="NP_001378922.1">
    <property type="nucleotide sequence ID" value="NM_001391993.1"/>
</dbReference>
<dbReference type="RefSeq" id="XP_011515736.1">
    <property type="nucleotide sequence ID" value="XM_011517434.2"/>
</dbReference>
<dbReference type="RefSeq" id="XP_011515737.1">
    <property type="nucleotide sequence ID" value="XM_011517435.2"/>
</dbReference>
<dbReference type="BioMuta" id="C8orf89"/>
<dbReference type="PaxDb" id="9606-ENSP00000485524"/>
<dbReference type="DNASU" id="100130301"/>
<dbReference type="Ensembl" id="ENST00000624510.4">
    <property type="protein sequence ID" value="ENSP00000485524.1"/>
    <property type="gene ID" value="ENSG00000274443.5"/>
</dbReference>
<dbReference type="GeneID" id="100130301"/>
<dbReference type="KEGG" id="hsa:100130301"/>
<dbReference type="MANE-Select" id="ENST00000624510.4">
    <property type="protein sequence ID" value="ENSP00000485524.1"/>
    <property type="RefSeq nucleotide sequence ID" value="NM_001243237.3"/>
    <property type="RefSeq protein sequence ID" value="NP_001230166.1"/>
</dbReference>
<dbReference type="UCSC" id="uc010lzh.2">
    <property type="organism name" value="human"/>
</dbReference>
<dbReference type="AGR" id="HGNC:51258"/>
<dbReference type="CTD" id="100130301"/>
<dbReference type="GeneCards" id="C8orf89"/>
<dbReference type="HGNC" id="HGNC:51258">
    <property type="gene designation" value="C8orf89"/>
</dbReference>
<dbReference type="HPA" id="ENSG00000274443">
    <property type="expression patterns" value="Tissue enriched (testis)"/>
</dbReference>
<dbReference type="neXtProt" id="NX_P0DMQ9"/>
<dbReference type="VEuPathDB" id="HostDB:ENSG00000274443"/>
<dbReference type="eggNOG" id="ENOG502SEC5">
    <property type="taxonomic scope" value="Eukaryota"/>
</dbReference>
<dbReference type="GeneTree" id="ENSGT00700000106212"/>
<dbReference type="HOGENOM" id="CLU_1703641_0_0_1"/>
<dbReference type="InParanoid" id="P0DMQ9"/>
<dbReference type="OMA" id="CTMVPLQ"/>
<dbReference type="OrthoDB" id="9888309at2759"/>
<dbReference type="PAN-GO" id="P0DMQ9">
    <property type="GO annotations" value="0 GO annotations based on evolutionary models"/>
</dbReference>
<dbReference type="PathwayCommons" id="P0DMQ9"/>
<dbReference type="BioGRID-ORCS" id="100130301">
    <property type="hits" value="9 hits in 224 CRISPR screens"/>
</dbReference>
<dbReference type="GenomeRNAi" id="100130301"/>
<dbReference type="Pharos" id="P0DMQ9">
    <property type="development level" value="Tdark"/>
</dbReference>
<dbReference type="PRO" id="PR:P0DMQ9"/>
<dbReference type="Proteomes" id="UP000005640">
    <property type="component" value="Chromosome 8"/>
</dbReference>
<dbReference type="RNAct" id="P0DMQ9">
    <property type="molecule type" value="protein"/>
</dbReference>
<dbReference type="Bgee" id="ENSG00000274443">
    <property type="expression patterns" value="Expressed in male germ line stem cell (sensu Vertebrata) in testis and 85 other cell types or tissues"/>
</dbReference>
<dbReference type="ExpressionAtlas" id="P0DMQ9">
    <property type="expression patterns" value="baseline and differential"/>
</dbReference>
<dbReference type="InterPro" id="IPR040505">
    <property type="entry name" value="DUF5537"/>
</dbReference>
<dbReference type="Pfam" id="PF17690">
    <property type="entry name" value="DUF5537"/>
    <property type="match status" value="1"/>
</dbReference>
<proteinExistence type="evidence at transcript level"/>
<sequence length="161" mass="18160">MSVLSPEIKCETSKFTRSSFGSCLIFESSWKKAVLETQKIKKEYTTAFGLEELKECIKMPYLPGLQSCQKSVSSTPLEVPKRLPRADAEVSAVRLKKTKETCSVAPLWEKSKGSGFSDPLTGAPSQYLERLSKIAILEYDTIRQETTTKSKKSKKRDLRDR</sequence>